<gene>
    <name type="primary">Rims1</name>
    <name type="synonym">Kiaa0340</name>
    <name type="synonym">Rab3ip1</name>
    <name type="synonym">Rim1</name>
</gene>
<name>RIMS1_MOUSE</name>
<reference key="1">
    <citation type="journal article" date="2001" name="J. Biol. Chem.">
        <title>Rim1 and rabphilin-3 bind Rab3-GTP by composite determinants partially related through N-terminal alpha-helix motifs.</title>
        <authorList>
            <person name="Wang X."/>
            <person name="Hu B."/>
            <person name="Zimmermann B."/>
            <person name="Kilimann M.W."/>
        </authorList>
    </citation>
    <scope>NUCLEOTIDE SEQUENCE [MRNA] (ISOFORM 2)</scope>
    <scope>ALTERNATIVE SPLICING</scope>
    <scope>MUTAGENESIS OF ARG-33</scope>
    <scope>INTERACTION WITH RAB3A; RAB3B AND RAB3D</scope>
    <source>
        <tissue>Brain</tissue>
    </source>
</reference>
<reference key="2">
    <citation type="submission" date="2003-07" db="EMBL/GenBank/DDBJ databases">
        <authorList>
            <person name="Wang X."/>
            <person name="Hu B."/>
            <person name="Kilimann M.W."/>
        </authorList>
    </citation>
    <scope>NUCLEOTIDE SEQUENCE [MRNA] (ISOFORMS 1; 3; 4; 5 AND 6)</scope>
</reference>
<reference key="3">
    <citation type="submission" date="2005-02" db="EMBL/GenBank/DDBJ databases">
        <title>Prediction of the coding sequences of mouse homologues of KIAA gene. The complete nucleotide sequences of mouse KIAA-homologous cDNAs identified by screening of terminal sequences of cDNA clones randomly sampled from size-fractionated libraries.</title>
        <authorList>
            <person name="Okazaki N."/>
            <person name="Kikuno R.F."/>
            <person name="Ohara R."/>
            <person name="Inamoto S."/>
            <person name="Nagase T."/>
            <person name="Ohara O."/>
            <person name="Koga H."/>
        </authorList>
    </citation>
    <scope>NUCLEOTIDE SEQUENCE [LARGE SCALE MRNA] OF 202-1463 (ISOFORM 7)</scope>
    <source>
        <tissue>Brain</tissue>
    </source>
</reference>
<reference key="4">
    <citation type="journal article" date="2002" name="Nature">
        <title>RIM1alpha forms a protein scaffold for regulating neurotransmitter release at the active zone.</title>
        <authorList>
            <person name="Schoch S."/>
            <person name="Castillo P.E."/>
            <person name="Jo T."/>
            <person name="Mukherjee K."/>
            <person name="Geppert M."/>
            <person name="Wang Y."/>
            <person name="Schmitz F."/>
            <person name="Malenka R.C."/>
            <person name="Suedhof T.C."/>
        </authorList>
    </citation>
    <scope>CHARACTERIZATION</scope>
</reference>
<reference key="5">
    <citation type="journal article" date="2003" name="J. Biol. Chem.">
        <title>Distinct Rab binding specificity of Rim1, Rim2, rabphilin, and Noc2. Identification of a critical determinant of Rab3A/Rab27A recognition by Rim2.</title>
        <authorList>
            <person name="Fukuda M."/>
        </authorList>
    </citation>
    <scope>INTERACTION WITH RAB3A; RAB3B; RAB3C; RAB3D; RAB10; RAB26 AND RAB37</scope>
</reference>
<reference key="6">
    <citation type="journal article" date="2006" name="Mol. Cell. Proteomics">
        <title>Comprehensive identification of phosphorylation sites in postsynaptic density preparations.</title>
        <authorList>
            <person name="Trinidad J.C."/>
            <person name="Specht C.G."/>
            <person name="Thalhammer A."/>
            <person name="Schoepfer R."/>
            <person name="Burlingame A.L."/>
        </authorList>
    </citation>
    <scope>IDENTIFICATION BY MASS SPECTROMETRY [LARGE SCALE ANALYSIS]</scope>
    <source>
        <tissue>Brain</tissue>
    </source>
</reference>
<reference key="7">
    <citation type="journal article" date="2007" name="Mol. Cell. Proteomics">
        <title>Qualitative and quantitative analyses of protein phosphorylation in naive and stimulated mouse synaptosomal preparations.</title>
        <authorList>
            <person name="Munton R.P."/>
            <person name="Tweedie-Cullen R."/>
            <person name="Livingstone-Zatchej M."/>
            <person name="Weinandy F."/>
            <person name="Waidelich M."/>
            <person name="Longo D."/>
            <person name="Gehrig P."/>
            <person name="Potthast F."/>
            <person name="Rutishauser D."/>
            <person name="Gerrits B."/>
            <person name="Panse C."/>
            <person name="Schlapbach R."/>
            <person name="Mansuy I.M."/>
        </authorList>
    </citation>
    <scope>IDENTIFICATION BY MASS SPECTROMETRY [LARGE SCALE ANALYSIS]</scope>
    <source>
        <tissue>Brain cortex</tissue>
    </source>
</reference>
<reference key="8">
    <citation type="journal article" date="2010" name="Cell">
        <title>A tissue-specific atlas of mouse protein phosphorylation and expression.</title>
        <authorList>
            <person name="Huttlin E.L."/>
            <person name="Jedrychowski M.P."/>
            <person name="Elias J.E."/>
            <person name="Goswami T."/>
            <person name="Rad R."/>
            <person name="Beausoleil S.A."/>
            <person name="Villen J."/>
            <person name="Haas W."/>
            <person name="Sowa M.E."/>
            <person name="Gygi S.P."/>
        </authorList>
    </citation>
    <scope>PHOSPHORYLATION [LARGE SCALE ANALYSIS] AT SER-563; SER-566; SER-716; SER-866; SER-1023; SER-1027; SER-1110; SER-1111; SER-1113; SER-1448 AND SER-1451</scope>
    <scope>PHOSPHORYLATION [LARGE SCALE ANALYSIS] AT SER-413 (ISOFORM 7)</scope>
    <scope>IDENTIFICATION BY MASS SPECTROMETRY [LARGE SCALE ANALYSIS]</scope>
    <source>
        <tissue>Brain</tissue>
        <tissue>Testis</tissue>
    </source>
</reference>
<evidence type="ECO:0000250" key="1"/>
<evidence type="ECO:0000250" key="2">
    <source>
        <dbReference type="UniProtKB" id="Q86UR5"/>
    </source>
</evidence>
<evidence type="ECO:0000250" key="3">
    <source>
        <dbReference type="UniProtKB" id="Q9JIR4"/>
    </source>
</evidence>
<evidence type="ECO:0000255" key="4">
    <source>
        <dbReference type="PROSITE-ProRule" id="PRU00041"/>
    </source>
</evidence>
<evidence type="ECO:0000255" key="5">
    <source>
        <dbReference type="PROSITE-ProRule" id="PRU00091"/>
    </source>
</evidence>
<evidence type="ECO:0000255" key="6">
    <source>
        <dbReference type="PROSITE-ProRule" id="PRU00143"/>
    </source>
</evidence>
<evidence type="ECO:0000255" key="7">
    <source>
        <dbReference type="PROSITE-ProRule" id="PRU00234"/>
    </source>
</evidence>
<evidence type="ECO:0000256" key="8">
    <source>
        <dbReference type="SAM" id="MobiDB-lite"/>
    </source>
</evidence>
<evidence type="ECO:0000269" key="9">
    <source>
    </source>
</evidence>
<evidence type="ECO:0000269" key="10">
    <source>
    </source>
</evidence>
<evidence type="ECO:0000269" key="11">
    <source>
    </source>
</evidence>
<evidence type="ECO:0000303" key="12">
    <source>
    </source>
</evidence>
<evidence type="ECO:0000303" key="13">
    <source ref="2"/>
</evidence>
<evidence type="ECO:0000303" key="14">
    <source ref="3"/>
</evidence>
<evidence type="ECO:0007744" key="15">
    <source>
    </source>
</evidence>
<organism>
    <name type="scientific">Mus musculus</name>
    <name type="common">Mouse</name>
    <dbReference type="NCBI Taxonomy" id="10090"/>
    <lineage>
        <taxon>Eukaryota</taxon>
        <taxon>Metazoa</taxon>
        <taxon>Chordata</taxon>
        <taxon>Craniata</taxon>
        <taxon>Vertebrata</taxon>
        <taxon>Euteleostomi</taxon>
        <taxon>Mammalia</taxon>
        <taxon>Eutheria</taxon>
        <taxon>Euarchontoglires</taxon>
        <taxon>Glires</taxon>
        <taxon>Rodentia</taxon>
        <taxon>Myomorpha</taxon>
        <taxon>Muroidea</taxon>
        <taxon>Muridae</taxon>
        <taxon>Murinae</taxon>
        <taxon>Mus</taxon>
        <taxon>Mus</taxon>
    </lineage>
</organism>
<accession>Q99NE5</accession>
<accession>Q5DU35</accession>
<accession>Q5J8K0</accession>
<accession>Q5J8K1</accession>
<accession>Q5J8K2</accession>
<accession>Q5J8K3</accession>
<accession>Q5J8K4</accession>
<proteinExistence type="evidence at protein level"/>
<dbReference type="EMBL" id="AJ310531">
    <property type="protein sequence ID" value="CAC32041.1"/>
    <property type="molecule type" value="mRNA"/>
</dbReference>
<dbReference type="EMBL" id="AY356534">
    <property type="protein sequence ID" value="AAR14797.1"/>
    <property type="molecule type" value="mRNA"/>
</dbReference>
<dbReference type="EMBL" id="AY356535">
    <property type="protein sequence ID" value="AAR14798.1"/>
    <property type="molecule type" value="mRNA"/>
</dbReference>
<dbReference type="EMBL" id="AY356536">
    <property type="protein sequence ID" value="AAR14799.1"/>
    <property type="molecule type" value="mRNA"/>
</dbReference>
<dbReference type="EMBL" id="AY356537">
    <property type="protein sequence ID" value="AAR14800.1"/>
    <property type="molecule type" value="mRNA"/>
</dbReference>
<dbReference type="EMBL" id="AY356538">
    <property type="protein sequence ID" value="AAR14801.1"/>
    <property type="molecule type" value="mRNA"/>
</dbReference>
<dbReference type="EMBL" id="AK220335">
    <property type="protein sequence ID" value="BAD90402.1"/>
    <property type="molecule type" value="mRNA"/>
</dbReference>
<dbReference type="RefSeq" id="NP_001012641.1">
    <property type="nucleotide sequence ID" value="NM_001012623.1"/>
</dbReference>
<dbReference type="RefSeq" id="NP_001012642.1">
    <property type="nucleotide sequence ID" value="NM_001012624.1"/>
</dbReference>
<dbReference type="RefSeq" id="NP_001012643.1">
    <property type="nucleotide sequence ID" value="NM_001012625.1"/>
</dbReference>
<dbReference type="RefSeq" id="NP_444500.1">
    <property type="nucleotide sequence ID" value="NM_053270.1"/>
</dbReference>
<dbReference type="RefSeq" id="NP_898839.2">
    <property type="nucleotide sequence ID" value="NM_183018.2"/>
</dbReference>
<dbReference type="SMR" id="Q99NE5"/>
<dbReference type="BioGRID" id="228025">
    <property type="interactions" value="14"/>
</dbReference>
<dbReference type="FunCoup" id="Q99NE5">
    <property type="interactions" value="422"/>
</dbReference>
<dbReference type="IntAct" id="Q99NE5">
    <property type="interactions" value="4"/>
</dbReference>
<dbReference type="MINT" id="Q99NE5"/>
<dbReference type="STRING" id="10090.ENSMUSP00000095420"/>
<dbReference type="GlyGen" id="Q99NE5">
    <property type="glycosylation" value="3 sites, 1 O-linked glycan (2 sites)"/>
</dbReference>
<dbReference type="iPTMnet" id="Q99NE5"/>
<dbReference type="PhosphoSitePlus" id="Q99NE5"/>
<dbReference type="SwissPalm" id="Q99NE5"/>
<dbReference type="PaxDb" id="10090-ENSMUSP00000095420"/>
<dbReference type="PeptideAtlas" id="Q99NE5"/>
<dbReference type="ProteomicsDB" id="255141">
    <molecule id="Q99NE5-1"/>
</dbReference>
<dbReference type="ProteomicsDB" id="255142">
    <molecule id="Q99NE5-2"/>
</dbReference>
<dbReference type="ProteomicsDB" id="255143">
    <molecule id="Q99NE5-3"/>
</dbReference>
<dbReference type="ProteomicsDB" id="255144">
    <molecule id="Q99NE5-4"/>
</dbReference>
<dbReference type="ProteomicsDB" id="255145">
    <molecule id="Q99NE5-5"/>
</dbReference>
<dbReference type="ProteomicsDB" id="255146">
    <molecule id="Q99NE5-6"/>
</dbReference>
<dbReference type="ProteomicsDB" id="255147">
    <molecule id="Q99NE5-7"/>
</dbReference>
<dbReference type="DNASU" id="116837"/>
<dbReference type="GeneID" id="116837"/>
<dbReference type="KEGG" id="mmu:116837"/>
<dbReference type="UCSC" id="uc029qni.1">
    <molecule id="Q99NE5-1"/>
    <property type="organism name" value="mouse"/>
</dbReference>
<dbReference type="UCSC" id="uc029qnj.1">
    <molecule id="Q99NE5-3"/>
    <property type="organism name" value="mouse"/>
</dbReference>
<dbReference type="UCSC" id="uc029qnk.1">
    <molecule id="Q99NE5-4"/>
    <property type="organism name" value="mouse"/>
</dbReference>
<dbReference type="UCSC" id="uc029qnm.1">
    <molecule id="Q99NE5-6"/>
    <property type="organism name" value="mouse"/>
</dbReference>
<dbReference type="AGR" id="MGI:2152971"/>
<dbReference type="CTD" id="22999"/>
<dbReference type="MGI" id="MGI:2152971">
    <property type="gene designation" value="Rims1"/>
</dbReference>
<dbReference type="eggNOG" id="KOG2060">
    <property type="taxonomic scope" value="Eukaryota"/>
</dbReference>
<dbReference type="InParanoid" id="Q99NE5"/>
<dbReference type="PhylomeDB" id="Q99NE5"/>
<dbReference type="Reactome" id="R-MMU-181429">
    <property type="pathway name" value="Serotonin Neurotransmitter Release Cycle"/>
</dbReference>
<dbReference type="Reactome" id="R-MMU-181430">
    <property type="pathway name" value="Norepinephrine Neurotransmitter Release Cycle"/>
</dbReference>
<dbReference type="Reactome" id="R-MMU-210500">
    <property type="pathway name" value="Glutamate Neurotransmitter Release Cycle"/>
</dbReference>
<dbReference type="Reactome" id="R-MMU-212676">
    <property type="pathway name" value="Dopamine Neurotransmitter Release Cycle"/>
</dbReference>
<dbReference type="Reactome" id="R-MMU-264642">
    <property type="pathway name" value="Acetylcholine Neurotransmitter Release Cycle"/>
</dbReference>
<dbReference type="Reactome" id="R-MMU-888590">
    <property type="pathway name" value="GABA synthesis, release, reuptake and degradation"/>
</dbReference>
<dbReference type="BioGRID-ORCS" id="116837">
    <property type="hits" value="4 hits in 23 CRISPR screens"/>
</dbReference>
<dbReference type="CD-CODE" id="CE726F99">
    <property type="entry name" value="Postsynaptic density"/>
</dbReference>
<dbReference type="ChiTaRS" id="Rims1">
    <property type="organism name" value="mouse"/>
</dbReference>
<dbReference type="PRO" id="PR:Q99NE5"/>
<dbReference type="Proteomes" id="UP000000589">
    <property type="component" value="Unplaced"/>
</dbReference>
<dbReference type="RNAct" id="Q99NE5">
    <property type="molecule type" value="protein"/>
</dbReference>
<dbReference type="GO" id="GO:0042995">
    <property type="term" value="C:cell projection"/>
    <property type="evidence" value="ECO:0007669"/>
    <property type="project" value="UniProtKB-KW"/>
</dbReference>
<dbReference type="GO" id="GO:0098891">
    <property type="term" value="C:extrinsic component of presynaptic active zone membrane"/>
    <property type="evidence" value="ECO:0000314"/>
    <property type="project" value="SynGO"/>
</dbReference>
<dbReference type="GO" id="GO:0098982">
    <property type="term" value="C:GABA-ergic synapse"/>
    <property type="evidence" value="ECO:0000314"/>
    <property type="project" value="SynGO"/>
</dbReference>
<dbReference type="GO" id="GO:0098978">
    <property type="term" value="C:glutamatergic synapse"/>
    <property type="evidence" value="ECO:0000314"/>
    <property type="project" value="SynGO"/>
</dbReference>
<dbReference type="GO" id="GO:0060077">
    <property type="term" value="C:inhibitory synapse"/>
    <property type="evidence" value="ECO:0000315"/>
    <property type="project" value="SynGO-UCL"/>
</dbReference>
<dbReference type="GO" id="GO:0005886">
    <property type="term" value="C:plasma membrane"/>
    <property type="evidence" value="ECO:0000250"/>
    <property type="project" value="ParkinsonsUK-UCL"/>
</dbReference>
<dbReference type="GO" id="GO:0014069">
    <property type="term" value="C:postsynaptic density"/>
    <property type="evidence" value="ECO:0000314"/>
    <property type="project" value="MGI"/>
</dbReference>
<dbReference type="GO" id="GO:0098831">
    <property type="term" value="C:presynaptic active zone cytoplasmic component"/>
    <property type="evidence" value="ECO:0000314"/>
    <property type="project" value="SynGO"/>
</dbReference>
<dbReference type="GO" id="GO:0042734">
    <property type="term" value="C:presynaptic membrane"/>
    <property type="evidence" value="ECO:0000250"/>
    <property type="project" value="UniProtKB"/>
</dbReference>
<dbReference type="GO" id="GO:0045202">
    <property type="term" value="C:synapse"/>
    <property type="evidence" value="ECO:0000314"/>
    <property type="project" value="MGI"/>
</dbReference>
<dbReference type="GO" id="GO:0031982">
    <property type="term" value="C:vesicle"/>
    <property type="evidence" value="ECO:0000314"/>
    <property type="project" value="BHF-UCL"/>
</dbReference>
<dbReference type="GO" id="GO:0031267">
    <property type="term" value="F:small GTPase binding"/>
    <property type="evidence" value="ECO:0000250"/>
    <property type="project" value="ParkinsonsUK-UCL"/>
</dbReference>
<dbReference type="GO" id="GO:0098882">
    <property type="term" value="F:structural constituent of presynaptic active zone"/>
    <property type="evidence" value="ECO:0000314"/>
    <property type="project" value="SynGO"/>
</dbReference>
<dbReference type="GO" id="GO:0044325">
    <property type="term" value="F:transmembrane transporter binding"/>
    <property type="evidence" value="ECO:0000314"/>
    <property type="project" value="MGI"/>
</dbReference>
<dbReference type="GO" id="GO:0008270">
    <property type="term" value="F:zinc ion binding"/>
    <property type="evidence" value="ECO:0007669"/>
    <property type="project" value="UniProtKB-KW"/>
</dbReference>
<dbReference type="GO" id="GO:0048791">
    <property type="term" value="P:calcium ion-regulated exocytosis of neurotransmitter"/>
    <property type="evidence" value="ECO:0000316"/>
    <property type="project" value="MGI"/>
</dbReference>
<dbReference type="GO" id="GO:0030154">
    <property type="term" value="P:cell differentiation"/>
    <property type="evidence" value="ECO:0007669"/>
    <property type="project" value="UniProtKB-KW"/>
</dbReference>
<dbReference type="GO" id="GO:0006886">
    <property type="term" value="P:intracellular protein transport"/>
    <property type="evidence" value="ECO:0007669"/>
    <property type="project" value="InterPro"/>
</dbReference>
<dbReference type="GO" id="GO:0007269">
    <property type="term" value="P:neurotransmitter secretion"/>
    <property type="evidence" value="ECO:0000316"/>
    <property type="project" value="MGI"/>
</dbReference>
<dbReference type="GO" id="GO:2000463">
    <property type="term" value="P:positive regulation of excitatory postsynaptic potential"/>
    <property type="evidence" value="ECO:0000316"/>
    <property type="project" value="ParkinsonsUK-UCL"/>
</dbReference>
<dbReference type="GO" id="GO:0010628">
    <property type="term" value="P:positive regulation of gene expression"/>
    <property type="evidence" value="ECO:0000316"/>
    <property type="project" value="ParkinsonsUK-UCL"/>
</dbReference>
<dbReference type="GO" id="GO:0097151">
    <property type="term" value="P:positive regulation of inhibitory postsynaptic potential"/>
    <property type="evidence" value="ECO:0000316"/>
    <property type="project" value="ParkinsonsUK-UCL"/>
</dbReference>
<dbReference type="GO" id="GO:0099525">
    <property type="term" value="P:presynaptic dense core vesicle exocytosis"/>
    <property type="evidence" value="ECO:0000314"/>
    <property type="project" value="SynGO"/>
</dbReference>
<dbReference type="GO" id="GO:0150037">
    <property type="term" value="P:regulation of calcium-dependent activation of synaptic vesicle fusion"/>
    <property type="evidence" value="ECO:0000314"/>
    <property type="project" value="SynGO"/>
</dbReference>
<dbReference type="GO" id="GO:0048169">
    <property type="term" value="P:regulation of long-term neuronal synaptic plasticity"/>
    <property type="evidence" value="ECO:0000315"/>
    <property type="project" value="MGI"/>
</dbReference>
<dbReference type="GO" id="GO:0042391">
    <property type="term" value="P:regulation of membrane potential"/>
    <property type="evidence" value="ECO:0000314"/>
    <property type="project" value="MGI"/>
</dbReference>
<dbReference type="GO" id="GO:0061669">
    <property type="term" value="P:spontaneous neurotransmitter secretion"/>
    <property type="evidence" value="ECO:0000316"/>
    <property type="project" value="ParkinsonsUK-UCL"/>
</dbReference>
<dbReference type="GO" id="GO:0016081">
    <property type="term" value="P:synaptic vesicle docking"/>
    <property type="evidence" value="ECO:0000314"/>
    <property type="project" value="SynGO"/>
</dbReference>
<dbReference type="GO" id="GO:0016082">
    <property type="term" value="P:synaptic vesicle priming"/>
    <property type="evidence" value="ECO:0000314"/>
    <property type="project" value="SynGO"/>
</dbReference>
<dbReference type="CDD" id="cd04031">
    <property type="entry name" value="C2A_RIM1alpha"/>
    <property type="match status" value="1"/>
</dbReference>
<dbReference type="CDD" id="cd04028">
    <property type="entry name" value="C2B_RIM1alpha"/>
    <property type="match status" value="1"/>
</dbReference>
<dbReference type="CDD" id="cd06714">
    <property type="entry name" value="PDZ_RIM-like"/>
    <property type="match status" value="1"/>
</dbReference>
<dbReference type="FunFam" id="3.30.40.10:FF:000546">
    <property type="entry name" value="Regulating synaptic membrane exocytosis 1"/>
    <property type="match status" value="1"/>
</dbReference>
<dbReference type="FunFam" id="2.60.40.150:FF:000001">
    <property type="entry name" value="Regulating synaptic membrane exocytosis 3, isoform CRA_a"/>
    <property type="match status" value="1"/>
</dbReference>
<dbReference type="FunFam" id="2.30.42.10:FF:000003">
    <property type="entry name" value="Regulating synaptic membrane exocytosis protein 1, putative"/>
    <property type="match status" value="1"/>
</dbReference>
<dbReference type="FunFam" id="2.60.40.150:FF:000003">
    <property type="entry name" value="Regulating synaptic membrane exocytosis protein 2"/>
    <property type="match status" value="1"/>
</dbReference>
<dbReference type="Gene3D" id="2.30.42.10">
    <property type="match status" value="1"/>
</dbReference>
<dbReference type="Gene3D" id="2.60.40.150">
    <property type="entry name" value="C2 domain"/>
    <property type="match status" value="2"/>
</dbReference>
<dbReference type="Gene3D" id="3.30.40.10">
    <property type="entry name" value="Zinc/RING finger domain, C3HC4 (zinc finger)"/>
    <property type="match status" value="1"/>
</dbReference>
<dbReference type="InterPro" id="IPR000008">
    <property type="entry name" value="C2_dom"/>
</dbReference>
<dbReference type="InterPro" id="IPR035892">
    <property type="entry name" value="C2_domain_sf"/>
</dbReference>
<dbReference type="InterPro" id="IPR001478">
    <property type="entry name" value="PDZ"/>
</dbReference>
<dbReference type="InterPro" id="IPR036034">
    <property type="entry name" value="PDZ_sf"/>
</dbReference>
<dbReference type="InterPro" id="IPR010911">
    <property type="entry name" value="Rab_BD"/>
</dbReference>
<dbReference type="InterPro" id="IPR039032">
    <property type="entry name" value="Rim-like"/>
</dbReference>
<dbReference type="InterPro" id="IPR054386">
    <property type="entry name" value="RIM_Znf"/>
</dbReference>
<dbReference type="InterPro" id="IPR017455">
    <property type="entry name" value="Znf_FYVE-rel"/>
</dbReference>
<dbReference type="InterPro" id="IPR011011">
    <property type="entry name" value="Znf_FYVE_PHD"/>
</dbReference>
<dbReference type="InterPro" id="IPR013083">
    <property type="entry name" value="Znf_RING/FYVE/PHD"/>
</dbReference>
<dbReference type="PANTHER" id="PTHR12157">
    <property type="entry name" value="REGULATING SYNAPTIC MEMBRANE EXOCYTOSIS PROTEIN"/>
    <property type="match status" value="1"/>
</dbReference>
<dbReference type="PANTHER" id="PTHR12157:SF18">
    <property type="entry name" value="REGULATING SYNAPTIC MEMBRANE EXOCYTOSIS PROTEIN 1"/>
    <property type="match status" value="1"/>
</dbReference>
<dbReference type="Pfam" id="PF00168">
    <property type="entry name" value="C2"/>
    <property type="match status" value="2"/>
</dbReference>
<dbReference type="Pfam" id="PF00595">
    <property type="entry name" value="PDZ"/>
    <property type="match status" value="1"/>
</dbReference>
<dbReference type="Pfam" id="PF22601">
    <property type="entry name" value="RIM2a_ZnF"/>
    <property type="match status" value="1"/>
</dbReference>
<dbReference type="SMART" id="SM00239">
    <property type="entry name" value="C2"/>
    <property type="match status" value="2"/>
</dbReference>
<dbReference type="SMART" id="SM00228">
    <property type="entry name" value="PDZ"/>
    <property type="match status" value="1"/>
</dbReference>
<dbReference type="SUPFAM" id="SSF49562">
    <property type="entry name" value="C2 domain (Calcium/lipid-binding domain, CaLB)"/>
    <property type="match status" value="2"/>
</dbReference>
<dbReference type="SUPFAM" id="SSF57903">
    <property type="entry name" value="FYVE/PHD zinc finger"/>
    <property type="match status" value="1"/>
</dbReference>
<dbReference type="SUPFAM" id="SSF50156">
    <property type="entry name" value="PDZ domain-like"/>
    <property type="match status" value="1"/>
</dbReference>
<dbReference type="PROSITE" id="PS50004">
    <property type="entry name" value="C2"/>
    <property type="match status" value="2"/>
</dbReference>
<dbReference type="PROSITE" id="PS50106">
    <property type="entry name" value="PDZ"/>
    <property type="match status" value="1"/>
</dbReference>
<dbReference type="PROSITE" id="PS50916">
    <property type="entry name" value="RABBD"/>
    <property type="match status" value="1"/>
</dbReference>
<dbReference type="PROSITE" id="PS50178">
    <property type="entry name" value="ZF_FYVE"/>
    <property type="match status" value="1"/>
</dbReference>
<feature type="chain" id="PRO_0000190199" description="Regulating synaptic membrane exocytosis protein 1">
    <location>
        <begin position="1"/>
        <end position="1463"/>
    </location>
</feature>
<feature type="domain" description="RabBD" evidence="7">
    <location>
        <begin position="22"/>
        <end position="205"/>
    </location>
</feature>
<feature type="domain" description="PDZ" evidence="6">
    <location>
        <begin position="440"/>
        <end position="526"/>
    </location>
</feature>
<feature type="domain" description="C2 1" evidence="4">
    <location>
        <begin position="577"/>
        <end position="700"/>
    </location>
</feature>
<feature type="domain" description="C2 2" evidence="4">
    <location>
        <begin position="1309"/>
        <end position="1427"/>
    </location>
</feature>
<feature type="zinc finger region" description="FYVE-type" evidence="5">
    <location>
        <begin position="133"/>
        <end position="193"/>
    </location>
</feature>
<feature type="region of interest" description="Disordered" evidence="8">
    <location>
        <begin position="1"/>
        <end position="26"/>
    </location>
</feature>
<feature type="region of interest" description="Disordered" evidence="8">
    <location>
        <begin position="205"/>
        <end position="393"/>
    </location>
</feature>
<feature type="region of interest" description="Disordered" evidence="8">
    <location>
        <begin position="533"/>
        <end position="567"/>
    </location>
</feature>
<feature type="region of interest" description="Disordered" evidence="8">
    <location>
        <begin position="705"/>
        <end position="856"/>
    </location>
</feature>
<feature type="region of interest" description="Disordered" evidence="8">
    <location>
        <begin position="874"/>
        <end position="1049"/>
    </location>
</feature>
<feature type="region of interest" description="Disordered" evidence="8">
    <location>
        <begin position="1104"/>
        <end position="1161"/>
    </location>
</feature>
<feature type="region of interest" description="Disordered" evidence="8">
    <location>
        <begin position="1216"/>
        <end position="1266"/>
    </location>
</feature>
<feature type="compositionally biased region" description="Pro residues" evidence="8">
    <location>
        <begin position="9"/>
        <end position="20"/>
    </location>
</feature>
<feature type="compositionally biased region" description="Polar residues" evidence="8">
    <location>
        <begin position="206"/>
        <end position="222"/>
    </location>
</feature>
<feature type="compositionally biased region" description="Basic and acidic residues" evidence="8">
    <location>
        <begin position="227"/>
        <end position="240"/>
    </location>
</feature>
<feature type="compositionally biased region" description="Polar residues" evidence="8">
    <location>
        <begin position="241"/>
        <end position="256"/>
    </location>
</feature>
<feature type="compositionally biased region" description="Basic and acidic residues" evidence="8">
    <location>
        <begin position="327"/>
        <end position="372"/>
    </location>
</feature>
<feature type="compositionally biased region" description="Acidic residues" evidence="8">
    <location>
        <begin position="381"/>
        <end position="391"/>
    </location>
</feature>
<feature type="compositionally biased region" description="Low complexity" evidence="8">
    <location>
        <begin position="535"/>
        <end position="551"/>
    </location>
</feature>
<feature type="compositionally biased region" description="Polar residues" evidence="8">
    <location>
        <begin position="770"/>
        <end position="779"/>
    </location>
</feature>
<feature type="compositionally biased region" description="Basic and acidic residues" evidence="8">
    <location>
        <begin position="827"/>
        <end position="844"/>
    </location>
</feature>
<feature type="compositionally biased region" description="Basic and acidic residues" evidence="8">
    <location>
        <begin position="928"/>
        <end position="941"/>
    </location>
</feature>
<feature type="compositionally biased region" description="Polar residues" evidence="8">
    <location>
        <begin position="1021"/>
        <end position="1035"/>
    </location>
</feature>
<feature type="compositionally biased region" description="Low complexity" evidence="8">
    <location>
        <begin position="1116"/>
        <end position="1137"/>
    </location>
</feature>
<feature type="compositionally biased region" description="Basic and acidic residues" evidence="8">
    <location>
        <begin position="1248"/>
        <end position="1261"/>
    </location>
</feature>
<feature type="binding site" evidence="5">
    <location>
        <position position="139"/>
    </location>
    <ligand>
        <name>Zn(2+)</name>
        <dbReference type="ChEBI" id="CHEBI:29105"/>
        <label>1</label>
    </ligand>
</feature>
<feature type="binding site" evidence="5">
    <location>
        <position position="142"/>
    </location>
    <ligand>
        <name>Zn(2+)</name>
        <dbReference type="ChEBI" id="CHEBI:29105"/>
        <label>1</label>
    </ligand>
</feature>
<feature type="binding site" evidence="5">
    <location>
        <position position="155"/>
    </location>
    <ligand>
        <name>Zn(2+)</name>
        <dbReference type="ChEBI" id="CHEBI:29105"/>
        <label>2</label>
    </ligand>
</feature>
<feature type="binding site" evidence="5">
    <location>
        <position position="158"/>
    </location>
    <ligand>
        <name>Zn(2+)</name>
        <dbReference type="ChEBI" id="CHEBI:29105"/>
        <label>2</label>
    </ligand>
</feature>
<feature type="binding site" evidence="5">
    <location>
        <position position="163"/>
    </location>
    <ligand>
        <name>Zn(2+)</name>
        <dbReference type="ChEBI" id="CHEBI:29105"/>
        <label>1</label>
    </ligand>
</feature>
<feature type="binding site" evidence="5">
    <location>
        <position position="166"/>
    </location>
    <ligand>
        <name>Zn(2+)</name>
        <dbReference type="ChEBI" id="CHEBI:29105"/>
        <label>1</label>
    </ligand>
</feature>
<feature type="binding site" evidence="5">
    <location>
        <position position="185"/>
    </location>
    <ligand>
        <name>Zn(2+)</name>
        <dbReference type="ChEBI" id="CHEBI:29105"/>
        <label>2</label>
    </ligand>
</feature>
<feature type="binding site" evidence="5">
    <location>
        <position position="188"/>
    </location>
    <ligand>
        <name>Zn(2+)</name>
        <dbReference type="ChEBI" id="CHEBI:29105"/>
        <label>2</label>
    </ligand>
</feature>
<feature type="modified residue" description="Phosphoserine" evidence="3">
    <location>
        <position position="413"/>
    </location>
</feature>
<feature type="modified residue" description="Phosphoserine" evidence="15">
    <location>
        <position position="563"/>
    </location>
</feature>
<feature type="modified residue" description="Phosphoserine" evidence="15">
    <location>
        <position position="566"/>
    </location>
</feature>
<feature type="modified residue" description="Phosphoserine" evidence="15">
    <location>
        <position position="716"/>
    </location>
</feature>
<feature type="modified residue" description="Phosphoserine" evidence="3">
    <location>
        <position position="812"/>
    </location>
</feature>
<feature type="modified residue" description="Phosphoserine" evidence="15">
    <location>
        <position position="866"/>
    </location>
</feature>
<feature type="modified residue" description="Phosphoserine" evidence="15">
    <location>
        <position position="1023"/>
    </location>
</feature>
<feature type="modified residue" description="Phosphothreonine" evidence="3">
    <location>
        <position position="1025"/>
    </location>
</feature>
<feature type="modified residue" description="Phosphoserine" evidence="15">
    <location>
        <position position="1027"/>
    </location>
</feature>
<feature type="modified residue" description="Phosphoserine" evidence="3">
    <location>
        <position position="1079"/>
    </location>
</feature>
<feature type="modified residue" description="Phosphoserine" evidence="3">
    <location>
        <position position="1081"/>
    </location>
</feature>
<feature type="modified residue" description="Phosphoserine" evidence="3">
    <location>
        <position position="1082"/>
    </location>
</feature>
<feature type="modified residue" description="Phosphoserine" evidence="15">
    <location>
        <position position="1110"/>
    </location>
</feature>
<feature type="modified residue" description="Phosphoserine" evidence="15">
    <location>
        <position position="1111"/>
    </location>
</feature>
<feature type="modified residue" description="Phosphoserine" evidence="15">
    <location>
        <position position="1113"/>
    </location>
</feature>
<feature type="modified residue" description="Phosphoserine" evidence="3">
    <location>
        <position position="1187"/>
    </location>
</feature>
<feature type="modified residue" description="Phosphoserine" evidence="15">
    <location>
        <position position="1448"/>
    </location>
</feature>
<feature type="modified residue" description="Phosphoserine" evidence="15">
    <location>
        <position position="1451"/>
    </location>
</feature>
<feature type="modified residue" description="Phosphoserine" evidence="2">
    <location>
        <position position="1454"/>
    </location>
</feature>
<feature type="modified residue" description="Phosphoserine" evidence="2">
    <location>
        <position position="1463"/>
    </location>
</feature>
<feature type="splice variant" id="VSP_022230" description="In isoform 7." evidence="14">
    <original>K</original>
    <variation>KEEEYQTRYRSDPNLARYPVKAPLEEQQMRMHARVSRARHERRHSDVALPHTEAAAAVSAETTAGKRAQTTARVSPPESPRARAPAAQPPAEHGPPPPRPAPGPAEPPEPRVPEPLRKQGRLDPGSAVLLRKAKREKAESMLRNDSLSSDQSESVRPSPPKPHRPKRGGKRRQMSVSSS</variation>
    <location>
        <position position="369"/>
    </location>
</feature>
<feature type="splice variant" id="VSP_022231" description="In isoform 2." evidence="12">
    <original>GVSTPEYTSCEDVELE</original>
    <variation>YQTRYRSDPNLARYPV</variation>
    <location>
        <begin position="373"/>
        <end position="388"/>
    </location>
</feature>
<feature type="splice variant" id="VSP_022232" description="In isoform 2." evidence="12">
    <location>
        <begin position="389"/>
        <end position="1463"/>
    </location>
</feature>
<feature type="splice variant" id="VSP_022233" description="In isoform 6 and isoform 7." evidence="13 14">
    <location>
        <begin position="853"/>
        <end position="1016"/>
    </location>
</feature>
<feature type="splice variant" id="VSP_022234" description="In isoform 5." evidence="13">
    <location>
        <begin position="904"/>
        <end position="1016"/>
    </location>
</feature>
<feature type="splice variant" id="VSP_022235" description="In isoform 3 and isoform 4." evidence="13">
    <location>
        <begin position="904"/>
        <end position="931"/>
    </location>
</feature>
<feature type="splice variant" id="VSP_022236" description="In isoform 4." evidence="13">
    <location>
        <begin position="956"/>
        <end position="1016"/>
    </location>
</feature>
<feature type="splice variant" id="VSP_022237" description="In isoform 7." evidence="14">
    <original>FTPKMQGRRMGTSGRAIIKST</original>
    <variation>LTLVLLMMALPYKFVQKSRLF</variation>
    <location>
        <begin position="1150"/>
        <end position="1170"/>
    </location>
</feature>
<feature type="splice variant" id="VSP_022238" description="In isoform 7." evidence="14">
    <location>
        <begin position="1171"/>
        <end position="1463"/>
    </location>
</feature>
<feature type="mutagenesis site" description="Abolishes interaction with RAB3A." evidence="9">
    <original>R</original>
    <variation>G</variation>
    <location>
        <position position="33"/>
    </location>
</feature>
<feature type="modified residue" description="Phosphoserine" evidence="15">
    <location sequence="Q99NE5-7">
        <position position="413"/>
    </location>
</feature>
<keyword id="KW-0025">Alternative splicing</keyword>
<keyword id="KW-1003">Cell membrane</keyword>
<keyword id="KW-0966">Cell projection</keyword>
<keyword id="KW-0221">Differentiation</keyword>
<keyword id="KW-0268">Exocytosis</keyword>
<keyword id="KW-0472">Membrane</keyword>
<keyword id="KW-0479">Metal-binding</keyword>
<keyword id="KW-0532">Neurotransmitter transport</keyword>
<keyword id="KW-0597">Phosphoprotein</keyword>
<keyword id="KW-1185">Reference proteome</keyword>
<keyword id="KW-0677">Repeat</keyword>
<keyword id="KW-0770">Synapse</keyword>
<keyword id="KW-0813">Transport</keyword>
<keyword id="KW-0862">Zinc</keyword>
<keyword id="KW-0863">Zinc-finger</keyword>
<sequence length="1463" mass="163161">MSSAVGPRGPRPPTVPPPMQELPDLSHLTEEERNIIMAVMDRQKEEEEKEEAMLKCVVRDMAKPAACKTPRNAESQPHQPPLNIFRCVCVPRKPSSEEGGPDRNWRLHQQFESYKEQVRKIGEEARRYQGEHKDDAPTCGICHKTKFADGCGHLCSYCRTKFCARCGGRVSLRSNNEDKVVMWVCNLCRKQQEILTKSGAWFFGSGPQQPSQDGTLSDTATGAGSEVPREKKARLQERSRSQTPLSTAAVSSQDTASHGAPLDRNKGAEPSQQALGPEQKQASRSRSEPPRERKKAPGLSEQNGKGGQKSERKRVPKSVVQPGEGTADERERKERRETRRLEKGRSQDYPDRLEKREDGRVAEDEKQRKEEEGVSTPEYTSCEDVELESESVSEKGDLDYWLDPATWHSRETSPISSHPVTWQPSKEGDRLIGRVILNKRTTMPKESGALLGLKVVGGKMTDLGRLGAFITKVKKGSLADVVGHLRAGDEVLEWNGKPLPGATNEEVYNIILESKSEPQVEIIVSRPIGDIPRIPESSHPPLESSSSSFESQKMERPSISVISPTSPGALKDAPQVLPGQLSVKLWYDKVGHQLIVNVLQATDLPPRVDGRPRNPYVKMYFLPDRSDKSKRRTKTVKKLLEPKWNQTFVYSHVHRRDFRERMLEITVWDQPRVQDEESEFLGEILIELETALLDDEPHWYKLQTHDESSLPLPQPSPFMPRRHIHGESSSKKLQRSQRISDSDISDYEVDDGIGVVPPVGYRASARESKATTLTVPEQQRTTHHRSRSVSPHRGDDQGRPRSRLPNVPLQRSLDEIHPTRRSRSPTRHHDASRSLADHRSRHAESQYSSEPDSELLMLPRAKRGRSAECLHMTSELQPSLDRARSASTNCLRPDTSLHSPERERGRWSPSLARRRPASPRIQIQHASPENDRHSRKSERSSIQKQSRKGTASDADRVLPPCLSRRGYAIPRATDQPVIRGKHTTRSRSSEHSSIRTLCSMHHLAPGGSAPPSPLLTRTHRQGSPTQSPPADTSFGSRRGRQLPQVPVRSGSIEQASLVVEERTRQMKMKVHRFKQTTGSGSSQELDHEQYSKYNIHKDQYRSCDNASAKSSDSDVSDVSAISRASSTSRLSSTSFMSEQSERPRGRISSFTPKMQGRRMGTSGRAIIKSTSVSGEIYTLEHNDGSQSDTAVGTVGAGGKKRRSSLSAKVVAIVSRRSRSTSQLSQTESGHKKLKSTIQRSTETGMAAEMRKMVRQPSRESTDGSINSYSSEGNLIFPGVRVGPDSQFSDFLDGLGPAQLVGRQTLATPAMGDIQIGMEDKKGQLEVEVIRARSLTQKPGSKSTPAPYVKVYLLENGACIAKKKTRIARKTLDPLYQQSLVFDESPQGKVLQVIVWGDYGRMDHKCFMGVAQILLEELDLSSMVIGWYKLFPPSSLVDPTLTPLTRRASQSSLESSSGPPCIRS</sequence>
<comment type="function">
    <text evidence="2 10">Rab effector involved in exocytosis (PubMed:11797009). May act as scaffold protein that regulates neurotransmitter release at the active zone. Essential for maintaining normal probability of neurotransmitter release and for regulating release during short-term synaptic plasticity (PubMed:11797009). Plays a role in dendrite formation by melanocytes (By similarity).</text>
</comment>
<comment type="subunit">
    <text evidence="1 9 11">Binds SNAP25, SYT1 and CACNA1B. Interaction with SYT1 is enhanced by calcium ions. Interaction with SNAP25 is weaker in the presence of calcium ions. Interacts with TSPOAP1 and RIMBP2; interacts with PPFIA3 and PPFIA4. Interacts with ERC1 (By similarity). Interacts with RAB3A, RAB3B and RAB3D that have been activated by GTP-binding. Interacts with RAB3C, RAB10, RAB26 and RAB37. Binds UNC13A.</text>
</comment>
<comment type="interaction">
    <interactant intactId="EBI-775541">
        <id>Q99NE5</id>
    </interactant>
    <interactant intactId="EBI-1551033">
        <id>Q9CZV8</id>
        <label>Fbxl20</label>
    </interactant>
    <organismsDiffer>false</organismsDiffer>
    <experiments>4</experiments>
</comment>
<comment type="subcellular location">
    <subcellularLocation>
        <location evidence="1">Cell membrane</location>
        <topology evidence="1">Peripheral membrane protein</topology>
    </subcellularLocation>
    <subcellularLocation>
        <location evidence="1">Synapse</location>
    </subcellularLocation>
    <subcellularLocation>
        <location evidence="1">Presynaptic cell membrane</location>
        <topology evidence="1">Peripheral membrane protein</topology>
    </subcellularLocation>
</comment>
<comment type="alternative products">
    <event type="alternative splicing"/>
    <isoform>
        <id>Q99NE5-1</id>
        <name>1</name>
        <sequence type="displayed"/>
    </isoform>
    <isoform>
        <id>Q99NE5-2</id>
        <name>2</name>
        <sequence type="described" ref="VSP_022231 VSP_022232"/>
    </isoform>
    <isoform>
        <id>Q99NE5-3</id>
        <name>3</name>
        <sequence type="described" ref="VSP_022235"/>
    </isoform>
    <isoform>
        <id>Q99NE5-4</id>
        <name>4</name>
        <sequence type="described" ref="VSP_022235 VSP_022236"/>
    </isoform>
    <isoform>
        <id>Q99NE5-5</id>
        <name>5</name>
        <sequence type="described" ref="VSP_022234"/>
    </isoform>
    <isoform>
        <id>Q99NE5-6</id>
        <name>6</name>
        <sequence type="described" ref="VSP_022233"/>
    </isoform>
    <isoform>
        <id>Q99NE5-7</id>
        <name>7</name>
        <sequence type="described" ref="VSP_022230 VSP_022233 VSP_022237 VSP_022238"/>
    </isoform>
    <text>A number of isoforms are produced.</text>
</comment>
<comment type="PTM">
    <text evidence="1">Phosphorylated by BRSK1.</text>
</comment>
<protein>
    <recommendedName>
        <fullName>Regulating synaptic membrane exocytosis protein 1</fullName>
    </recommendedName>
    <alternativeName>
        <fullName>Rab-3-interacting molecule 1</fullName>
        <shortName>RIM 1</shortName>
    </alternativeName>
    <alternativeName>
        <fullName>Rab-3-interacting protein 1</fullName>
    </alternativeName>
</protein>